<sequence>MFPFALLYVLSVSFRKIFILQLVGLVLTYDFTNCDFEKIKAAYLSTISKDLITYMSGTKSTEFNNTVSCSNRPHCLTEIQSLTFNPTAGCASLAKEMFAMKTKAALAIWCPGYSETQINATQAMKKRRKRKVTTNKCLEQVSQLQGLWRRFNRPLLKQQ</sequence>
<feature type="signal peptide" evidence="2">
    <location>
        <begin position="1"/>
        <end position="28"/>
    </location>
</feature>
<feature type="chain" id="PRO_0000300873" description="Thymic stromal lymphopoietin">
    <location>
        <begin position="29"/>
        <end position="159"/>
    </location>
</feature>
<feature type="glycosylation site" description="N-linked (GlcNAc...) asparagine" evidence="2">
    <location>
        <position position="64"/>
    </location>
</feature>
<feature type="glycosylation site" description="N-linked (GlcNAc...) asparagine" evidence="2">
    <location>
        <position position="119"/>
    </location>
</feature>
<feature type="disulfide bond" evidence="1">
    <location>
        <begin position="34"/>
        <end position="110"/>
    </location>
</feature>
<feature type="disulfide bond" evidence="1">
    <location>
        <begin position="69"/>
        <end position="75"/>
    </location>
</feature>
<feature type="disulfide bond" evidence="1">
    <location>
        <begin position="90"/>
        <end position="137"/>
    </location>
</feature>
<feature type="splice variant" id="VSP_057462" description="In isoform 2." evidence="7">
    <location>
        <begin position="1"/>
        <end position="96"/>
    </location>
</feature>
<feature type="sequence conflict" description="In Ref. 3; AAH40592." evidence="8" ref="3">
    <original>MFPFALLYVLS</original>
    <variation>MKCLGQSKKEE</variation>
    <location>
        <begin position="1"/>
        <end position="11"/>
    </location>
</feature>
<feature type="helix" evidence="9">
    <location>
        <begin position="31"/>
        <end position="33"/>
    </location>
</feature>
<feature type="helix" evidence="9">
    <location>
        <begin position="36"/>
        <end position="55"/>
    </location>
</feature>
<feature type="helix" evidence="9">
    <location>
        <begin position="60"/>
        <end position="62"/>
    </location>
</feature>
<feature type="helix" evidence="9">
    <location>
        <begin position="72"/>
        <end position="84"/>
    </location>
</feature>
<feature type="helix" evidence="9">
    <location>
        <begin position="97"/>
        <end position="109"/>
    </location>
</feature>
<feature type="helix" evidence="9">
    <location>
        <begin position="113"/>
        <end position="116"/>
    </location>
</feature>
<feature type="helix" evidence="9">
    <location>
        <begin position="137"/>
        <end position="151"/>
    </location>
</feature>
<protein>
    <recommendedName>
        <fullName>Thymic stromal lymphopoietin</fullName>
    </recommendedName>
</protein>
<name>TSLP_HUMAN</name>
<reference key="1">
    <citation type="journal article" date="2001" name="J. Immunol.">
        <title>Human thymic stromal lymphopoietin preferentially stimulates myeloid cells.</title>
        <authorList>
            <person name="Reche P.A."/>
            <person name="Soumelis V."/>
            <person name="Gorman D.M."/>
            <person name="Clifford T."/>
            <person name="Liu M.-R."/>
            <person name="Travis M."/>
            <person name="Zurawski S.M."/>
            <person name="Johnston J."/>
            <person name="Liu Y.-J."/>
            <person name="Spits H."/>
            <person name="de Waal Malefyt R."/>
            <person name="Kastelein R.A."/>
            <person name="Bazan J.F."/>
        </authorList>
    </citation>
    <scope>NUCLEOTIDE SEQUENCE [MRNA] (ISOFORM 1)</scope>
    <scope>SUBCELLULAR LOCATION</scope>
    <scope>FUNCTION (ISOFORM 1)</scope>
</reference>
<reference key="2">
    <citation type="journal article" date="2001" name="Leukemia">
        <title>Cloning of human thymic stromal lymphopoietin (TSLP) and signaling mechanisms leading to proliferation.</title>
        <authorList>
            <person name="Quentmeier H."/>
            <person name="Drexler H.G."/>
            <person name="Fleckenstein D."/>
            <person name="Zaborski M."/>
            <person name="Armstrong A."/>
            <person name="Sims J.E."/>
            <person name="Lyman S.D."/>
        </authorList>
    </citation>
    <scope>NUCLEOTIDE SEQUENCE [MRNA] (ISOFORM 1)</scope>
    <scope>FUNCTION (ISOFORM 1)</scope>
    <scope>TISSUE SPECIFICITY</scope>
</reference>
<reference key="3">
    <citation type="journal article" date="2004" name="Nature">
        <title>The DNA sequence and comparative analysis of human chromosome 5.</title>
        <authorList>
            <person name="Schmutz J."/>
            <person name="Martin J."/>
            <person name="Terry A."/>
            <person name="Couronne O."/>
            <person name="Grimwood J."/>
            <person name="Lowry S."/>
            <person name="Gordon L.A."/>
            <person name="Scott D."/>
            <person name="Xie G."/>
            <person name="Huang W."/>
            <person name="Hellsten U."/>
            <person name="Tran-Gyamfi M."/>
            <person name="She X."/>
            <person name="Prabhakar S."/>
            <person name="Aerts A."/>
            <person name="Altherr M."/>
            <person name="Bajorek E."/>
            <person name="Black S."/>
            <person name="Branscomb E."/>
            <person name="Caoile C."/>
            <person name="Challacombe J.F."/>
            <person name="Chan Y.M."/>
            <person name="Denys M."/>
            <person name="Detter J.C."/>
            <person name="Escobar J."/>
            <person name="Flowers D."/>
            <person name="Fotopulos D."/>
            <person name="Glavina T."/>
            <person name="Gomez M."/>
            <person name="Gonzales E."/>
            <person name="Goodstein D."/>
            <person name="Grigoriev I."/>
            <person name="Groza M."/>
            <person name="Hammon N."/>
            <person name="Hawkins T."/>
            <person name="Haydu L."/>
            <person name="Israni S."/>
            <person name="Jett J."/>
            <person name="Kadner K."/>
            <person name="Kimball H."/>
            <person name="Kobayashi A."/>
            <person name="Lopez F."/>
            <person name="Lou Y."/>
            <person name="Martinez D."/>
            <person name="Medina C."/>
            <person name="Morgan J."/>
            <person name="Nandkeshwar R."/>
            <person name="Noonan J.P."/>
            <person name="Pitluck S."/>
            <person name="Pollard M."/>
            <person name="Predki P."/>
            <person name="Priest J."/>
            <person name="Ramirez L."/>
            <person name="Retterer J."/>
            <person name="Rodriguez A."/>
            <person name="Rogers S."/>
            <person name="Salamov A."/>
            <person name="Salazar A."/>
            <person name="Thayer N."/>
            <person name="Tice H."/>
            <person name="Tsai M."/>
            <person name="Ustaszewska A."/>
            <person name="Vo N."/>
            <person name="Wheeler J."/>
            <person name="Wu K."/>
            <person name="Yang J."/>
            <person name="Dickson M."/>
            <person name="Cheng J.-F."/>
            <person name="Eichler E.E."/>
            <person name="Olsen A."/>
            <person name="Pennacchio L.A."/>
            <person name="Rokhsar D.S."/>
            <person name="Richardson P."/>
            <person name="Lucas S.M."/>
            <person name="Myers R.M."/>
            <person name="Rubin E.M."/>
        </authorList>
    </citation>
    <scope>NUCLEOTIDE SEQUENCE [LARGE SCALE GENOMIC DNA]</scope>
</reference>
<reference key="4">
    <citation type="submission" date="2005-09" db="EMBL/GenBank/DDBJ databases">
        <authorList>
            <person name="Mural R.J."/>
            <person name="Istrail S."/>
            <person name="Sutton G."/>
            <person name="Florea L."/>
            <person name="Halpern A.L."/>
            <person name="Mobarry C.M."/>
            <person name="Lippert R."/>
            <person name="Walenz B."/>
            <person name="Shatkay H."/>
            <person name="Dew I."/>
            <person name="Miller J.R."/>
            <person name="Flanigan M.J."/>
            <person name="Edwards N.J."/>
            <person name="Bolanos R."/>
            <person name="Fasulo D."/>
            <person name="Halldorsson B.V."/>
            <person name="Hannenhalli S."/>
            <person name="Turner R."/>
            <person name="Yooseph S."/>
            <person name="Lu F."/>
            <person name="Nusskern D.R."/>
            <person name="Shue B.C."/>
            <person name="Zheng X.H."/>
            <person name="Zhong F."/>
            <person name="Delcher A.L."/>
            <person name="Huson D.H."/>
            <person name="Kravitz S.A."/>
            <person name="Mouchard L."/>
            <person name="Reinert K."/>
            <person name="Remington K.A."/>
            <person name="Clark A.G."/>
            <person name="Waterman M.S."/>
            <person name="Eichler E.E."/>
            <person name="Adams M.D."/>
            <person name="Hunkapiller M.W."/>
            <person name="Myers E.W."/>
            <person name="Venter J.C."/>
        </authorList>
    </citation>
    <scope>NUCLEOTIDE SEQUENCE [LARGE SCALE GENOMIC DNA]</scope>
</reference>
<reference key="5">
    <citation type="journal article" date="2004" name="Genome Res.">
        <title>The status, quality, and expansion of the NIH full-length cDNA project: the Mammalian Gene Collection (MGC).</title>
        <authorList>
            <consortium name="The MGC Project Team"/>
        </authorList>
    </citation>
    <scope>NUCLEOTIDE SEQUENCE [LARGE SCALE MRNA] (ISOFORMS 1 AND 2)</scope>
    <source>
        <tissue>Brain</tissue>
        <tissue>Lung</tissue>
        <tissue>Testis</tissue>
    </source>
</reference>
<reference key="6">
    <citation type="journal article" date="2007" name="J. Exp. Med.">
        <title>Thymic stromal lymphopoietin is released by human epithelial cells in response to microbes, trauma, or inflammation and potently activates mast cells.</title>
        <authorList>
            <person name="Allakhverdi Z."/>
            <person name="Comeau M.R."/>
            <person name="Jessup H.K."/>
            <person name="Yoon B.R."/>
            <person name="Brewer A."/>
            <person name="Chartier S."/>
            <person name="Paquette N."/>
            <person name="Ziegler S.F."/>
            <person name="Sarfati M."/>
            <person name="Delespesse G."/>
        </authorList>
    </citation>
    <scope>FUNCTION IN ALLERGIC INFLAMMATION (ISOFORM 1)</scope>
    <scope>INDUCTION</scope>
</reference>
<reference key="7">
    <citation type="journal article" date="2015" name="Mucosal Immunol.">
        <title>The short form of TSLP is constitutively translated in human keratinocytes and has characteristics of an antimicrobial peptide.</title>
        <authorList>
            <person name="Bjerkan L."/>
            <person name="Schreurs O."/>
            <person name="Engen S.A."/>
            <person name="Jahnsen F.L."/>
            <person name="Baekkevold E.S."/>
            <person name="Blix I.J."/>
            <person name="Schenck K."/>
        </authorList>
    </citation>
    <scope>TISSUE SPECIFICITY (ISOFORM 2)</scope>
    <scope>ALTERNATIVE SPLICING (ISOFORM 2)</scope>
    <scope>FUNCTION (ISOFORM 2)</scope>
</reference>
<gene>
    <name type="primary">TSLP</name>
</gene>
<keyword id="KW-0002">3D-structure</keyword>
<keyword id="KW-0025">Alternative splicing</keyword>
<keyword id="KW-0202">Cytokine</keyword>
<keyword id="KW-1015">Disulfide bond</keyword>
<keyword id="KW-0325">Glycoprotein</keyword>
<keyword id="KW-1185">Reference proteome</keyword>
<keyword id="KW-0964">Secreted</keyword>
<keyword id="KW-0732">Signal</keyword>
<dbReference type="EMBL" id="AY037115">
    <property type="protein sequence ID" value="AAK67490.1"/>
    <property type="molecule type" value="mRNA"/>
</dbReference>
<dbReference type="EMBL" id="AF338732">
    <property type="protein sequence ID" value="AAK60617.1"/>
    <property type="molecule type" value="mRNA"/>
</dbReference>
<dbReference type="EMBL" id="AC008572">
    <property type="status" value="NOT_ANNOTATED_CDS"/>
    <property type="molecule type" value="Genomic_DNA"/>
</dbReference>
<dbReference type="EMBL" id="CH471086">
    <property type="protein sequence ID" value="EAW49038.1"/>
    <property type="molecule type" value="Genomic_DNA"/>
</dbReference>
<dbReference type="EMBL" id="BC016720">
    <property type="protein sequence ID" value="AAH16720.1"/>
    <property type="status" value="ALT_INIT"/>
    <property type="molecule type" value="mRNA"/>
</dbReference>
<dbReference type="EMBL" id="BC022894">
    <property type="protein sequence ID" value="AAH22894.1"/>
    <property type="status" value="ALT_INIT"/>
    <property type="molecule type" value="mRNA"/>
</dbReference>
<dbReference type="EMBL" id="BC040592">
    <property type="protein sequence ID" value="AAH40592.1"/>
    <property type="molecule type" value="mRNA"/>
</dbReference>
<dbReference type="CCDS" id="CCDS4101.1">
    <molecule id="Q969D9-1"/>
</dbReference>
<dbReference type="RefSeq" id="NP_149024.1">
    <molecule id="Q969D9-1"/>
    <property type="nucleotide sequence ID" value="NM_033035.5"/>
</dbReference>
<dbReference type="RefSeq" id="NP_612561.2">
    <molecule id="Q969D9-2"/>
    <property type="nucleotide sequence ID" value="NM_138551.5"/>
</dbReference>
<dbReference type="RefSeq" id="XP_011542000.1">
    <molecule id="Q969D9-2"/>
    <property type="nucleotide sequence ID" value="XM_011543698.2"/>
</dbReference>
<dbReference type="RefSeq" id="XP_054209708.1">
    <molecule id="Q969D9-2"/>
    <property type="nucleotide sequence ID" value="XM_054353733.1"/>
</dbReference>
<dbReference type="PDB" id="5J11">
    <property type="method" value="X-ray"/>
    <property type="resolution" value="2.56 A"/>
    <property type="chains" value="A=36-159"/>
</dbReference>
<dbReference type="PDB" id="5J12">
    <property type="method" value="X-ray"/>
    <property type="resolution" value="3.55 A"/>
    <property type="chains" value="A=1-159"/>
</dbReference>
<dbReference type="PDB" id="5J13">
    <property type="method" value="X-ray"/>
    <property type="resolution" value="2.30 A"/>
    <property type="chains" value="A=29-159"/>
</dbReference>
<dbReference type="PDB" id="8QFZ">
    <property type="method" value="X-ray"/>
    <property type="resolution" value="1.65 A"/>
    <property type="chains" value="A=29-155"/>
</dbReference>
<dbReference type="PDBsum" id="5J11"/>
<dbReference type="PDBsum" id="5J12"/>
<dbReference type="PDBsum" id="5J13"/>
<dbReference type="PDBsum" id="8QFZ"/>
<dbReference type="SASBDB" id="Q969D9"/>
<dbReference type="SMR" id="Q969D9"/>
<dbReference type="BioGRID" id="124555">
    <property type="interactions" value="4"/>
</dbReference>
<dbReference type="CORUM" id="Q969D9"/>
<dbReference type="FunCoup" id="Q969D9">
    <property type="interactions" value="452"/>
</dbReference>
<dbReference type="IntAct" id="Q969D9">
    <property type="interactions" value="2"/>
</dbReference>
<dbReference type="STRING" id="9606.ENSP00000339804"/>
<dbReference type="ChEMBL" id="CHEMBL3712931"/>
<dbReference type="DrugBank" id="DB19397">
    <property type="generic name" value="AZD8630"/>
</dbReference>
<dbReference type="DrugBank" id="DB15090">
    <property type="generic name" value="Tezepelumab"/>
</dbReference>
<dbReference type="DrugCentral" id="Q969D9"/>
<dbReference type="GlyCosmos" id="Q969D9">
    <property type="glycosylation" value="2 sites, No reported glycans"/>
</dbReference>
<dbReference type="GlyGen" id="Q969D9">
    <property type="glycosylation" value="2 sites"/>
</dbReference>
<dbReference type="PhosphoSitePlus" id="Q969D9"/>
<dbReference type="BioMuta" id="TSLP"/>
<dbReference type="MassIVE" id="Q969D9"/>
<dbReference type="PaxDb" id="9606-ENSP00000339804"/>
<dbReference type="PeptideAtlas" id="Q969D9"/>
<dbReference type="ABCD" id="Q969D9">
    <property type="antibodies" value="11 sequenced antibodies"/>
</dbReference>
<dbReference type="Antibodypedia" id="25309">
    <property type="antibodies" value="836 antibodies from 43 providers"/>
</dbReference>
<dbReference type="DNASU" id="85480"/>
<dbReference type="Ensembl" id="ENST00000344895.4">
    <molecule id="Q969D9-1"/>
    <property type="protein sequence ID" value="ENSP00000339804.3"/>
    <property type="gene ID" value="ENSG00000145777.15"/>
</dbReference>
<dbReference type="Ensembl" id="ENST00000379706.4">
    <molecule id="Q969D9-2"/>
    <property type="protein sequence ID" value="ENSP00000427827.1"/>
    <property type="gene ID" value="ENSG00000145777.15"/>
</dbReference>
<dbReference type="GeneID" id="85480"/>
<dbReference type="KEGG" id="hsa:85480"/>
<dbReference type="MANE-Select" id="ENST00000344895.4">
    <property type="protein sequence ID" value="ENSP00000339804.3"/>
    <property type="RefSeq nucleotide sequence ID" value="NM_033035.5"/>
    <property type="RefSeq protein sequence ID" value="NP_149024.1"/>
</dbReference>
<dbReference type="UCSC" id="uc003kpb.3">
    <molecule id="Q969D9-1"/>
    <property type="organism name" value="human"/>
</dbReference>
<dbReference type="UCSC" id="uc031skq.1">
    <property type="organism name" value="human"/>
</dbReference>
<dbReference type="AGR" id="HGNC:30743"/>
<dbReference type="CTD" id="85480"/>
<dbReference type="DisGeNET" id="85480"/>
<dbReference type="GeneCards" id="TSLP"/>
<dbReference type="HGNC" id="HGNC:30743">
    <property type="gene designation" value="TSLP"/>
</dbReference>
<dbReference type="HPA" id="ENSG00000145777">
    <property type="expression patterns" value="Tissue enhanced (liver, urinary bladder)"/>
</dbReference>
<dbReference type="MalaCards" id="TSLP"/>
<dbReference type="MIM" id="607003">
    <property type="type" value="gene"/>
</dbReference>
<dbReference type="neXtProt" id="NX_Q969D9"/>
<dbReference type="OpenTargets" id="ENSG00000145777"/>
<dbReference type="PharmGKB" id="PA162407159"/>
<dbReference type="VEuPathDB" id="HostDB:ENSG00000145777"/>
<dbReference type="eggNOG" id="ENOG502TEM0">
    <property type="taxonomic scope" value="Eukaryota"/>
</dbReference>
<dbReference type="GeneTree" id="ENSGT00390000012541"/>
<dbReference type="HOGENOM" id="CLU_2885173_0_0_1"/>
<dbReference type="InParanoid" id="Q969D9"/>
<dbReference type="OMA" id="CLEQVSY"/>
<dbReference type="OrthoDB" id="9838157at2759"/>
<dbReference type="PAN-GO" id="Q969D9">
    <property type="GO annotations" value="1 GO annotation based on evolutionary models"/>
</dbReference>
<dbReference type="PhylomeDB" id="Q969D9"/>
<dbReference type="TreeFam" id="TF338216"/>
<dbReference type="PathwayCommons" id="Q969D9"/>
<dbReference type="Reactome" id="R-HSA-1266695">
    <property type="pathway name" value="Interleukin-7 signaling"/>
</dbReference>
<dbReference type="SignaLink" id="Q969D9"/>
<dbReference type="SIGNOR" id="Q969D9"/>
<dbReference type="BioGRID-ORCS" id="85480">
    <property type="hits" value="15 hits in 1147 CRISPR screens"/>
</dbReference>
<dbReference type="GeneWiki" id="Thymic_stromal_lymphopoietin"/>
<dbReference type="GenomeRNAi" id="85480"/>
<dbReference type="Pharos" id="Q969D9">
    <property type="development level" value="Tclin"/>
</dbReference>
<dbReference type="PRO" id="PR:Q969D9"/>
<dbReference type="Proteomes" id="UP000005640">
    <property type="component" value="Chromosome 5"/>
</dbReference>
<dbReference type="RNAct" id="Q969D9">
    <property type="molecule type" value="protein"/>
</dbReference>
<dbReference type="Bgee" id="ENSG00000145777">
    <property type="expression patterns" value="Expressed in epithelial cell of pancreas and 114 other cell types or tissues"/>
</dbReference>
<dbReference type="ExpressionAtlas" id="Q969D9">
    <property type="expression patterns" value="baseline and differential"/>
</dbReference>
<dbReference type="GO" id="GO:0005576">
    <property type="term" value="C:extracellular region"/>
    <property type="evidence" value="ECO:0000314"/>
    <property type="project" value="UniProtKB"/>
</dbReference>
<dbReference type="GO" id="GO:0005615">
    <property type="term" value="C:extracellular space"/>
    <property type="evidence" value="ECO:0000314"/>
    <property type="project" value="UniProt"/>
</dbReference>
<dbReference type="GO" id="GO:0005125">
    <property type="term" value="F:cytokine activity"/>
    <property type="evidence" value="ECO:0000314"/>
    <property type="project" value="UniProtKB"/>
</dbReference>
<dbReference type="GO" id="GO:0005139">
    <property type="term" value="F:interleukin-7 receptor binding"/>
    <property type="evidence" value="ECO:0000315"/>
    <property type="project" value="UniProtKB"/>
</dbReference>
<dbReference type="GO" id="GO:0061844">
    <property type="term" value="P:antimicrobial humoral immune response mediated by antimicrobial peptide"/>
    <property type="evidence" value="ECO:0000314"/>
    <property type="project" value="UniProtKB"/>
</dbReference>
<dbReference type="GO" id="GO:0007259">
    <property type="term" value="P:cell surface receptor signaling pathway via JAK-STAT"/>
    <property type="evidence" value="ECO:0000314"/>
    <property type="project" value="GO_Central"/>
</dbReference>
<dbReference type="GO" id="GO:0019221">
    <property type="term" value="P:cytokine-mediated signaling pathway"/>
    <property type="evidence" value="ECO:0000314"/>
    <property type="project" value="UniProt"/>
</dbReference>
<dbReference type="GO" id="GO:0050832">
    <property type="term" value="P:defense response to fungus"/>
    <property type="evidence" value="ECO:0000314"/>
    <property type="project" value="UniProtKB"/>
</dbReference>
<dbReference type="GO" id="GO:0050829">
    <property type="term" value="P:defense response to Gram-negative bacterium"/>
    <property type="evidence" value="ECO:0000314"/>
    <property type="project" value="UniProtKB"/>
</dbReference>
<dbReference type="GO" id="GO:0038111">
    <property type="term" value="P:interleukin-7-mediated signaling pathway"/>
    <property type="evidence" value="ECO:0000314"/>
    <property type="project" value="UniProtKB"/>
</dbReference>
<dbReference type="GO" id="GO:0043066">
    <property type="term" value="P:negative regulation of apoptotic process"/>
    <property type="evidence" value="ECO:0000314"/>
    <property type="project" value="UniProtKB"/>
</dbReference>
<dbReference type="GO" id="GO:0008284">
    <property type="term" value="P:positive regulation of cell population proliferation"/>
    <property type="evidence" value="ECO:0000314"/>
    <property type="project" value="UniProtKB"/>
</dbReference>
<dbReference type="GO" id="GO:0071654">
    <property type="term" value="P:positive regulation of chemokine (C-C motif) ligand 1 production"/>
    <property type="evidence" value="ECO:0000315"/>
    <property type="project" value="UniProtKB"/>
</dbReference>
<dbReference type="GO" id="GO:0032722">
    <property type="term" value="P:positive regulation of chemokine production"/>
    <property type="evidence" value="ECO:0000314"/>
    <property type="project" value="UniProtKB"/>
</dbReference>
<dbReference type="GO" id="GO:0001961">
    <property type="term" value="P:positive regulation of cytokine-mediated signaling pathway"/>
    <property type="evidence" value="ECO:0000314"/>
    <property type="project" value="UniProtKB"/>
</dbReference>
<dbReference type="GO" id="GO:0071657">
    <property type="term" value="P:positive regulation of granulocyte colony-stimulating factor production"/>
    <property type="evidence" value="ECO:0000315"/>
    <property type="project" value="UniProtKB"/>
</dbReference>
<dbReference type="GO" id="GO:0050729">
    <property type="term" value="P:positive regulation of inflammatory response"/>
    <property type="evidence" value="ECO:0000315"/>
    <property type="project" value="UniProtKB"/>
</dbReference>
<dbReference type="GO" id="GO:0032733">
    <property type="term" value="P:positive regulation of interleukin-10 production"/>
    <property type="evidence" value="ECO:0000315"/>
    <property type="project" value="UniProtKB"/>
</dbReference>
<dbReference type="GO" id="GO:0032736">
    <property type="term" value="P:positive regulation of interleukin-13 production"/>
    <property type="evidence" value="ECO:0000315"/>
    <property type="project" value="UniProtKB"/>
</dbReference>
<dbReference type="GO" id="GO:0032754">
    <property type="term" value="P:positive regulation of interleukin-5 production"/>
    <property type="evidence" value="ECO:0000315"/>
    <property type="project" value="UniProtKB"/>
</dbReference>
<dbReference type="GO" id="GO:0032755">
    <property type="term" value="P:positive regulation of interleukin-6 production"/>
    <property type="evidence" value="ECO:0000315"/>
    <property type="project" value="UniProtKB"/>
</dbReference>
<dbReference type="GO" id="GO:0033005">
    <property type="term" value="P:positive regulation of mast cell activation"/>
    <property type="evidence" value="ECO:0000315"/>
    <property type="project" value="UniProtKB"/>
</dbReference>
<dbReference type="GO" id="GO:1904894">
    <property type="term" value="P:positive regulation of receptor signaling pathway via STAT"/>
    <property type="evidence" value="ECO:0000314"/>
    <property type="project" value="UniProtKB"/>
</dbReference>
<dbReference type="FunFam" id="1.20.1250.90:FF:000001">
    <property type="entry name" value="Thymic stromal lymphopoietin"/>
    <property type="match status" value="1"/>
</dbReference>
<dbReference type="Gene3D" id="1.20.1250.90">
    <property type="entry name" value="Thymic stromal lymphopoietin"/>
    <property type="match status" value="1"/>
</dbReference>
<dbReference type="InterPro" id="IPR029189">
    <property type="entry name" value="TSLP"/>
</dbReference>
<dbReference type="InterPro" id="IPR038329">
    <property type="entry name" value="TSLP_sf"/>
</dbReference>
<dbReference type="PANTHER" id="PTHR38003">
    <property type="entry name" value="THYMIC STROMAL LYMPHOPOIETIN"/>
    <property type="match status" value="1"/>
</dbReference>
<dbReference type="PANTHER" id="PTHR38003:SF1">
    <property type="entry name" value="THYMIC STROMAL LYMPHOPOIETIN"/>
    <property type="match status" value="1"/>
</dbReference>
<dbReference type="Pfam" id="PF15216">
    <property type="entry name" value="TSLP"/>
    <property type="match status" value="1"/>
</dbReference>
<comment type="function">
    <molecule>Isoform 1</molecule>
    <text evidence="3 4 5">Cytokine that induces the release of T-cell-attracting chemokines from monocytes and, in particular, enhances the maturation of CD11c(+) dendritic cells. Can induce allergic inflammation by directly activating mast cells.</text>
</comment>
<comment type="function">
    <molecule>Isoform 2</molecule>
    <text evidence="6">May act as an antimicrobial peptide in the oral cavity and on the skin.</text>
</comment>
<comment type="subunit">
    <text evidence="1">Interacts with a receptor composed of CRLF2 and IL7R. Binding of TSLP to CRLF2/TSLPR is a mechanistic prerequisite for recruitment of IL7R to the high-affinity ternary complex.</text>
</comment>
<comment type="subcellular location">
    <subcellularLocation>
        <location evidence="3">Secreted</location>
    </subcellularLocation>
</comment>
<comment type="alternative products">
    <event type="alternative splicing"/>
    <isoform>
        <id>Q969D9-1</id>
        <name>1</name>
        <name>lfTSLP</name>
        <sequence type="displayed"/>
    </isoform>
    <isoform>
        <id>Q969D9-2</id>
        <name>2</name>
        <name>sfTSLP</name>
        <sequence type="described" ref="VSP_057462"/>
    </isoform>
</comment>
<comment type="tissue specificity">
    <text evidence="4 6">Isoform 1 is expressed in a number of tissues including heart, liver and prostate. Isoform 2 is the predominant form in keratinocytes of oral mucosa, skin and in salivary glands. It is secreted into saliva.</text>
</comment>
<comment type="induction">
    <text evidence="5">Released by primary epithelial cells in response to certain microbial products, physical injury, or inflammatory cytokines.</text>
</comment>
<comment type="sequence caution" evidence="8">
    <conflict type="erroneous initiation">
        <sequence resource="EMBL-CDS" id="AAH16720"/>
    </conflict>
    <text>Truncated N-terminus.</text>
</comment>
<comment type="sequence caution" evidence="8">
    <conflict type="erroneous initiation">
        <sequence resource="EMBL-CDS" id="AAH22894"/>
    </conflict>
    <text>Extended N-terminus.</text>
</comment>
<proteinExistence type="evidence at protein level"/>
<evidence type="ECO:0000250" key="1">
    <source>
        <dbReference type="UniProtKB" id="Q9JIE6"/>
    </source>
</evidence>
<evidence type="ECO:0000255" key="2"/>
<evidence type="ECO:0000269" key="3">
    <source>
    </source>
</evidence>
<evidence type="ECO:0000269" key="4">
    <source>
    </source>
</evidence>
<evidence type="ECO:0000269" key="5">
    <source>
    </source>
</evidence>
<evidence type="ECO:0000269" key="6">
    <source>
    </source>
</evidence>
<evidence type="ECO:0000303" key="7">
    <source>
    </source>
</evidence>
<evidence type="ECO:0000305" key="8"/>
<evidence type="ECO:0007829" key="9">
    <source>
        <dbReference type="PDB" id="8QFZ"/>
    </source>
</evidence>
<organism>
    <name type="scientific">Homo sapiens</name>
    <name type="common">Human</name>
    <dbReference type="NCBI Taxonomy" id="9606"/>
    <lineage>
        <taxon>Eukaryota</taxon>
        <taxon>Metazoa</taxon>
        <taxon>Chordata</taxon>
        <taxon>Craniata</taxon>
        <taxon>Vertebrata</taxon>
        <taxon>Euteleostomi</taxon>
        <taxon>Mammalia</taxon>
        <taxon>Eutheria</taxon>
        <taxon>Euarchontoglires</taxon>
        <taxon>Primates</taxon>
        <taxon>Haplorrhini</taxon>
        <taxon>Catarrhini</taxon>
        <taxon>Hominidae</taxon>
        <taxon>Homo</taxon>
    </lineage>
</organism>
<accession>Q969D9</accession>
<accession>G3XAM8</accession>
<accession>Q8IW99</accession>
<accession>Q96AU7</accession>